<organism>
    <name type="scientific">Pseudoalteromonas translucida (strain TAC 125)</name>
    <dbReference type="NCBI Taxonomy" id="326442"/>
    <lineage>
        <taxon>Bacteria</taxon>
        <taxon>Pseudomonadati</taxon>
        <taxon>Pseudomonadota</taxon>
        <taxon>Gammaproteobacteria</taxon>
        <taxon>Alteromonadales</taxon>
        <taxon>Pseudoalteromonadaceae</taxon>
        <taxon>Pseudoalteromonas</taxon>
    </lineage>
</organism>
<gene>
    <name type="ordered locus">PSHAb0045</name>
</gene>
<dbReference type="EMBL" id="CR954247">
    <property type="protein sequence ID" value="CAI89096.1"/>
    <property type="molecule type" value="Genomic_DNA"/>
</dbReference>
<dbReference type="STRING" id="326442.PSHAb0045"/>
<dbReference type="KEGG" id="pha:PSHAb0045"/>
<dbReference type="PATRIC" id="fig|326442.8.peg.2961"/>
<dbReference type="eggNOG" id="COG1671">
    <property type="taxonomic scope" value="Bacteria"/>
</dbReference>
<dbReference type="HOGENOM" id="CLU_106619_2_1_6"/>
<dbReference type="BioCyc" id="PHAL326442:PSHA_RS15085-MONOMER"/>
<dbReference type="Proteomes" id="UP000006843">
    <property type="component" value="Chromosome II"/>
</dbReference>
<dbReference type="CDD" id="cd18720">
    <property type="entry name" value="PIN_YqxD-like"/>
    <property type="match status" value="1"/>
</dbReference>
<dbReference type="HAMAP" id="MF_00489">
    <property type="entry name" value="UPF0178"/>
    <property type="match status" value="1"/>
</dbReference>
<dbReference type="InterPro" id="IPR003791">
    <property type="entry name" value="UPF0178"/>
</dbReference>
<dbReference type="NCBIfam" id="NF001095">
    <property type="entry name" value="PRK00124.1"/>
    <property type="match status" value="1"/>
</dbReference>
<dbReference type="PANTHER" id="PTHR35146">
    <property type="entry name" value="UPF0178 PROTEIN YAII"/>
    <property type="match status" value="1"/>
</dbReference>
<dbReference type="PANTHER" id="PTHR35146:SF1">
    <property type="entry name" value="UPF0178 PROTEIN YAII"/>
    <property type="match status" value="1"/>
</dbReference>
<dbReference type="Pfam" id="PF02639">
    <property type="entry name" value="DUF188"/>
    <property type="match status" value="1"/>
</dbReference>
<keyword id="KW-1185">Reference proteome</keyword>
<feature type="chain" id="PRO_0000241819" description="UPF0178 protein PSHAb0045">
    <location>
        <begin position="1"/>
        <end position="151"/>
    </location>
</feature>
<accession>Q3ICQ7</accession>
<protein>
    <recommendedName>
        <fullName evidence="1">UPF0178 protein PSHAb0045</fullName>
    </recommendedName>
</protein>
<name>Y3545_PSET1</name>
<evidence type="ECO:0000255" key="1">
    <source>
        <dbReference type="HAMAP-Rule" id="MF_00489"/>
    </source>
</evidence>
<sequence length="151" mass="16583">MKIWVDADACPVVIKEILFRAAERTQTETILVANHAMRIPPSKYISRLQVSSGFDVADDEIVKRIAKGDLVITGDIPLASEVIDNGGQALNPRGELYTTENIRSILNVRDFMDTMRSSGVEMSGGPPPLSQTDRQNFANNLDRILAQNKAG</sequence>
<comment type="similarity">
    <text evidence="1">Belongs to the UPF0178 family.</text>
</comment>
<reference key="1">
    <citation type="journal article" date="2005" name="Genome Res.">
        <title>Coping with cold: the genome of the versatile marine Antarctica bacterium Pseudoalteromonas haloplanktis TAC125.</title>
        <authorList>
            <person name="Medigue C."/>
            <person name="Krin E."/>
            <person name="Pascal G."/>
            <person name="Barbe V."/>
            <person name="Bernsel A."/>
            <person name="Bertin P.N."/>
            <person name="Cheung F."/>
            <person name="Cruveiller S."/>
            <person name="D'Amico S."/>
            <person name="Duilio A."/>
            <person name="Fang G."/>
            <person name="Feller G."/>
            <person name="Ho C."/>
            <person name="Mangenot S."/>
            <person name="Marino G."/>
            <person name="Nilsson J."/>
            <person name="Parrilli E."/>
            <person name="Rocha E.P.C."/>
            <person name="Rouy Z."/>
            <person name="Sekowska A."/>
            <person name="Tutino M.L."/>
            <person name="Vallenet D."/>
            <person name="von Heijne G."/>
            <person name="Danchin A."/>
        </authorList>
    </citation>
    <scope>NUCLEOTIDE SEQUENCE [LARGE SCALE GENOMIC DNA]</scope>
    <source>
        <strain>TAC 125</strain>
    </source>
</reference>
<proteinExistence type="inferred from homology"/>